<protein>
    <recommendedName>
        <fullName evidence="1">Crossover junction endodeoxyribonuclease RuvC</fullName>
        <ecNumber evidence="1">3.1.21.10</ecNumber>
    </recommendedName>
    <alternativeName>
        <fullName evidence="1">Holliday junction nuclease RuvC</fullName>
    </alternativeName>
    <alternativeName>
        <fullName evidence="1">Holliday junction resolvase RuvC</fullName>
    </alternativeName>
</protein>
<evidence type="ECO:0000255" key="1">
    <source>
        <dbReference type="HAMAP-Rule" id="MF_00034"/>
    </source>
</evidence>
<sequence>MRALGIDPGTATMGWGIVEFNNGHLRLIDVGALTTPAGMPHPERLLQLYNGLRAIIERLRPDTAAVEELFFGKNVNTALTVGQARGVALLALAQAGIPVHEYKPLAVKQAVAGYGGADKRQMQEMVRLTLGLATIPRPDDAADALAIAICHAYTAPTLQRFGLS</sequence>
<keyword id="KW-0963">Cytoplasm</keyword>
<keyword id="KW-0227">DNA damage</keyword>
<keyword id="KW-0233">DNA recombination</keyword>
<keyword id="KW-0234">DNA repair</keyword>
<keyword id="KW-0238">DNA-binding</keyword>
<keyword id="KW-0255">Endonuclease</keyword>
<keyword id="KW-0378">Hydrolase</keyword>
<keyword id="KW-0460">Magnesium</keyword>
<keyword id="KW-0479">Metal-binding</keyword>
<keyword id="KW-0540">Nuclease</keyword>
<name>RUVC_CHLSY</name>
<feature type="chain" id="PRO_1000195244" description="Crossover junction endodeoxyribonuclease RuvC">
    <location>
        <begin position="1"/>
        <end position="164"/>
    </location>
</feature>
<feature type="active site" evidence="1">
    <location>
        <position position="7"/>
    </location>
</feature>
<feature type="active site" evidence="1">
    <location>
        <position position="67"/>
    </location>
</feature>
<feature type="active site" evidence="1">
    <location>
        <position position="140"/>
    </location>
</feature>
<feature type="binding site" evidence="1">
    <location>
        <position position="7"/>
    </location>
    <ligand>
        <name>Mg(2+)</name>
        <dbReference type="ChEBI" id="CHEBI:18420"/>
        <label>1</label>
    </ligand>
</feature>
<feature type="binding site" evidence="1">
    <location>
        <position position="67"/>
    </location>
    <ligand>
        <name>Mg(2+)</name>
        <dbReference type="ChEBI" id="CHEBI:18420"/>
        <label>2</label>
    </ligand>
</feature>
<feature type="binding site" evidence="1">
    <location>
        <position position="140"/>
    </location>
    <ligand>
        <name>Mg(2+)</name>
        <dbReference type="ChEBI" id="CHEBI:18420"/>
        <label>1</label>
    </ligand>
</feature>
<dbReference type="EC" id="3.1.21.10" evidence="1"/>
<dbReference type="EMBL" id="CP001364">
    <property type="protein sequence ID" value="ACM52563.1"/>
    <property type="molecule type" value="Genomic_DNA"/>
</dbReference>
<dbReference type="SMR" id="B9LAL7"/>
<dbReference type="KEGG" id="chl:Chy400_1142"/>
<dbReference type="HOGENOM" id="CLU_091257_3_1_0"/>
<dbReference type="OrthoDB" id="9805499at2"/>
<dbReference type="GO" id="GO:0005737">
    <property type="term" value="C:cytoplasm"/>
    <property type="evidence" value="ECO:0007669"/>
    <property type="project" value="UniProtKB-SubCell"/>
</dbReference>
<dbReference type="GO" id="GO:0048476">
    <property type="term" value="C:Holliday junction resolvase complex"/>
    <property type="evidence" value="ECO:0007669"/>
    <property type="project" value="UniProtKB-UniRule"/>
</dbReference>
<dbReference type="GO" id="GO:0008821">
    <property type="term" value="F:crossover junction DNA endonuclease activity"/>
    <property type="evidence" value="ECO:0007669"/>
    <property type="project" value="UniProtKB-UniRule"/>
</dbReference>
<dbReference type="GO" id="GO:0003677">
    <property type="term" value="F:DNA binding"/>
    <property type="evidence" value="ECO:0007669"/>
    <property type="project" value="UniProtKB-KW"/>
</dbReference>
<dbReference type="GO" id="GO:0000287">
    <property type="term" value="F:magnesium ion binding"/>
    <property type="evidence" value="ECO:0007669"/>
    <property type="project" value="UniProtKB-UniRule"/>
</dbReference>
<dbReference type="GO" id="GO:0006310">
    <property type="term" value="P:DNA recombination"/>
    <property type="evidence" value="ECO:0007669"/>
    <property type="project" value="UniProtKB-UniRule"/>
</dbReference>
<dbReference type="GO" id="GO:0006281">
    <property type="term" value="P:DNA repair"/>
    <property type="evidence" value="ECO:0007669"/>
    <property type="project" value="UniProtKB-UniRule"/>
</dbReference>
<dbReference type="CDD" id="cd16962">
    <property type="entry name" value="RuvC"/>
    <property type="match status" value="1"/>
</dbReference>
<dbReference type="FunFam" id="3.30.420.10:FF:000002">
    <property type="entry name" value="Crossover junction endodeoxyribonuclease RuvC"/>
    <property type="match status" value="1"/>
</dbReference>
<dbReference type="Gene3D" id="3.30.420.10">
    <property type="entry name" value="Ribonuclease H-like superfamily/Ribonuclease H"/>
    <property type="match status" value="1"/>
</dbReference>
<dbReference type="HAMAP" id="MF_00034">
    <property type="entry name" value="RuvC"/>
    <property type="match status" value="1"/>
</dbReference>
<dbReference type="InterPro" id="IPR012337">
    <property type="entry name" value="RNaseH-like_sf"/>
</dbReference>
<dbReference type="InterPro" id="IPR036397">
    <property type="entry name" value="RNaseH_sf"/>
</dbReference>
<dbReference type="InterPro" id="IPR020563">
    <property type="entry name" value="X-over_junc_endoDNase_Mg_BS"/>
</dbReference>
<dbReference type="InterPro" id="IPR002176">
    <property type="entry name" value="X-over_junc_endoDNase_RuvC"/>
</dbReference>
<dbReference type="NCBIfam" id="NF000711">
    <property type="entry name" value="PRK00039.2-1"/>
    <property type="match status" value="1"/>
</dbReference>
<dbReference type="NCBIfam" id="TIGR00228">
    <property type="entry name" value="ruvC"/>
    <property type="match status" value="1"/>
</dbReference>
<dbReference type="PANTHER" id="PTHR30194">
    <property type="entry name" value="CROSSOVER JUNCTION ENDODEOXYRIBONUCLEASE RUVC"/>
    <property type="match status" value="1"/>
</dbReference>
<dbReference type="PANTHER" id="PTHR30194:SF3">
    <property type="entry name" value="CROSSOVER JUNCTION ENDODEOXYRIBONUCLEASE RUVC"/>
    <property type="match status" value="1"/>
</dbReference>
<dbReference type="Pfam" id="PF02075">
    <property type="entry name" value="RuvC"/>
    <property type="match status" value="1"/>
</dbReference>
<dbReference type="PRINTS" id="PR00696">
    <property type="entry name" value="RSOLVASERUVC"/>
</dbReference>
<dbReference type="SUPFAM" id="SSF53098">
    <property type="entry name" value="Ribonuclease H-like"/>
    <property type="match status" value="1"/>
</dbReference>
<dbReference type="PROSITE" id="PS01321">
    <property type="entry name" value="RUVC"/>
    <property type="match status" value="1"/>
</dbReference>
<organism>
    <name type="scientific">Chloroflexus aurantiacus (strain ATCC 29364 / DSM 637 / Y-400-fl)</name>
    <dbReference type="NCBI Taxonomy" id="480224"/>
    <lineage>
        <taxon>Bacteria</taxon>
        <taxon>Bacillati</taxon>
        <taxon>Chloroflexota</taxon>
        <taxon>Chloroflexia</taxon>
        <taxon>Chloroflexales</taxon>
        <taxon>Chloroflexineae</taxon>
        <taxon>Chloroflexaceae</taxon>
        <taxon>Chloroflexus</taxon>
    </lineage>
</organism>
<gene>
    <name evidence="1" type="primary">ruvC</name>
    <name type="ordered locus">Chy400_1142</name>
</gene>
<proteinExistence type="inferred from homology"/>
<comment type="function">
    <text evidence="1">The RuvA-RuvB-RuvC complex processes Holliday junction (HJ) DNA during genetic recombination and DNA repair. Endonuclease that resolves HJ intermediates. Cleaves cruciform DNA by making single-stranded nicks across the HJ at symmetrical positions within the homologous arms, yielding a 5'-phosphate and a 3'-hydroxyl group; requires a central core of homology in the junction. The consensus cleavage sequence is 5'-(A/T)TT(C/G)-3'. Cleavage occurs on the 3'-side of the TT dinucleotide at the point of strand exchange. HJ branch migration catalyzed by RuvA-RuvB allows RuvC to scan DNA until it finds its consensus sequence, where it cleaves and resolves the cruciform DNA.</text>
</comment>
<comment type="catalytic activity">
    <reaction evidence="1">
        <text>Endonucleolytic cleavage at a junction such as a reciprocal single-stranded crossover between two homologous DNA duplexes (Holliday junction).</text>
        <dbReference type="EC" id="3.1.21.10"/>
    </reaction>
</comment>
<comment type="cofactor">
    <cofactor evidence="1">
        <name>Mg(2+)</name>
        <dbReference type="ChEBI" id="CHEBI:18420"/>
    </cofactor>
    <text evidence="1">Binds 2 Mg(2+) ion per subunit.</text>
</comment>
<comment type="subunit">
    <text evidence="1">Homodimer which binds Holliday junction (HJ) DNA. The HJ becomes 2-fold symmetrical on binding to RuvC with unstacked arms; it has a different conformation from HJ DNA in complex with RuvA. In the full resolvosome a probable DNA-RuvA(4)-RuvB(12)-RuvC(2) complex forms which resolves the HJ.</text>
</comment>
<comment type="subcellular location">
    <subcellularLocation>
        <location evidence="1">Cytoplasm</location>
    </subcellularLocation>
</comment>
<comment type="similarity">
    <text evidence="1">Belongs to the RuvC family.</text>
</comment>
<reference key="1">
    <citation type="submission" date="2009-01" db="EMBL/GenBank/DDBJ databases">
        <title>Complete sequence of Chloroflexus sp. Y-400-fl.</title>
        <authorList>
            <consortium name="US DOE Joint Genome Institute"/>
            <person name="Lucas S."/>
            <person name="Copeland A."/>
            <person name="Lapidus A."/>
            <person name="Glavina del Rio T."/>
            <person name="Dalin E."/>
            <person name="Tice H."/>
            <person name="Bruce D."/>
            <person name="Goodwin L."/>
            <person name="Pitluck S."/>
            <person name="Sims D."/>
            <person name="Kiss H."/>
            <person name="Brettin T."/>
            <person name="Detter J.C."/>
            <person name="Han C."/>
            <person name="Larimer F."/>
            <person name="Land M."/>
            <person name="Hauser L."/>
            <person name="Kyrpides N."/>
            <person name="Ovchinnikova G."/>
            <person name="Bryant D.A."/>
            <person name="Richardson P."/>
        </authorList>
    </citation>
    <scope>NUCLEOTIDE SEQUENCE [LARGE SCALE GENOMIC DNA]</scope>
    <source>
        <strain>ATCC 29364 / DSM 637 / Y-400-fl</strain>
    </source>
</reference>
<accession>B9LAL7</accession>